<evidence type="ECO:0000255" key="1">
    <source>
        <dbReference type="HAMAP-Rule" id="MF_01618"/>
    </source>
</evidence>
<reference key="1">
    <citation type="journal article" date="2005" name="Nucleic Acids Res.">
        <title>Genome dynamics and diversity of Shigella species, the etiologic agents of bacillary dysentery.</title>
        <authorList>
            <person name="Yang F."/>
            <person name="Yang J."/>
            <person name="Zhang X."/>
            <person name="Chen L."/>
            <person name="Jiang Y."/>
            <person name="Yan Y."/>
            <person name="Tang X."/>
            <person name="Wang J."/>
            <person name="Xiong Z."/>
            <person name="Dong J."/>
            <person name="Xue Y."/>
            <person name="Zhu Y."/>
            <person name="Xu X."/>
            <person name="Sun L."/>
            <person name="Chen S."/>
            <person name="Nie H."/>
            <person name="Peng J."/>
            <person name="Xu J."/>
            <person name="Wang Y."/>
            <person name="Yuan Z."/>
            <person name="Wen Y."/>
            <person name="Yao Z."/>
            <person name="Shen Y."/>
            <person name="Qiang B."/>
            <person name="Hou Y."/>
            <person name="Yu J."/>
            <person name="Jin Q."/>
        </authorList>
    </citation>
    <scope>NUCLEOTIDE SEQUENCE [LARGE SCALE GENOMIC DNA]</scope>
    <source>
        <strain>Sb227</strain>
    </source>
</reference>
<dbReference type="EC" id="2.3.1.16" evidence="1"/>
<dbReference type="EMBL" id="CP000036">
    <property type="protein sequence ID" value="ABB66942.1"/>
    <property type="molecule type" value="Genomic_DNA"/>
</dbReference>
<dbReference type="RefSeq" id="WP_000531949.1">
    <property type="nucleotide sequence ID" value="NC_007613.1"/>
</dbReference>
<dbReference type="SMR" id="Q31YB6"/>
<dbReference type="KEGG" id="sbo:SBO_2380"/>
<dbReference type="HOGENOM" id="CLU_031026_2_0_6"/>
<dbReference type="UniPathway" id="UPA00659"/>
<dbReference type="Proteomes" id="UP000007067">
    <property type="component" value="Chromosome"/>
</dbReference>
<dbReference type="GO" id="GO:0005829">
    <property type="term" value="C:cytosol"/>
    <property type="evidence" value="ECO:0007669"/>
    <property type="project" value="TreeGrafter"/>
</dbReference>
<dbReference type="GO" id="GO:0003988">
    <property type="term" value="F:acetyl-CoA C-acyltransferase activity"/>
    <property type="evidence" value="ECO:0007669"/>
    <property type="project" value="UniProtKB-UniRule"/>
</dbReference>
<dbReference type="GO" id="GO:0006635">
    <property type="term" value="P:fatty acid beta-oxidation"/>
    <property type="evidence" value="ECO:0007669"/>
    <property type="project" value="UniProtKB-UniRule"/>
</dbReference>
<dbReference type="CDD" id="cd00751">
    <property type="entry name" value="thiolase"/>
    <property type="match status" value="1"/>
</dbReference>
<dbReference type="FunFam" id="3.40.47.10:FF:000011">
    <property type="entry name" value="3-ketoacyl-CoA thiolase"/>
    <property type="match status" value="1"/>
</dbReference>
<dbReference type="Gene3D" id="3.40.47.10">
    <property type="match status" value="1"/>
</dbReference>
<dbReference type="HAMAP" id="MF_01618">
    <property type="entry name" value="FadI"/>
    <property type="match status" value="1"/>
</dbReference>
<dbReference type="InterPro" id="IPR012806">
    <property type="entry name" value="Ac-CoA_C-AcTrfase_FadI"/>
</dbReference>
<dbReference type="InterPro" id="IPR002155">
    <property type="entry name" value="Thiolase"/>
</dbReference>
<dbReference type="InterPro" id="IPR016039">
    <property type="entry name" value="Thiolase-like"/>
</dbReference>
<dbReference type="InterPro" id="IPR020615">
    <property type="entry name" value="Thiolase_acyl_enz_int_AS"/>
</dbReference>
<dbReference type="InterPro" id="IPR020610">
    <property type="entry name" value="Thiolase_AS"/>
</dbReference>
<dbReference type="InterPro" id="IPR020617">
    <property type="entry name" value="Thiolase_C"/>
</dbReference>
<dbReference type="InterPro" id="IPR020613">
    <property type="entry name" value="Thiolase_CS"/>
</dbReference>
<dbReference type="InterPro" id="IPR020616">
    <property type="entry name" value="Thiolase_N"/>
</dbReference>
<dbReference type="NCBIfam" id="TIGR01930">
    <property type="entry name" value="AcCoA-C-Actrans"/>
    <property type="match status" value="1"/>
</dbReference>
<dbReference type="NCBIfam" id="TIGR02446">
    <property type="entry name" value="FadI"/>
    <property type="match status" value="1"/>
</dbReference>
<dbReference type="NCBIfam" id="NF006516">
    <property type="entry name" value="PRK08963.1"/>
    <property type="match status" value="1"/>
</dbReference>
<dbReference type="PANTHER" id="PTHR18919:SF107">
    <property type="entry name" value="ACETYL-COA ACETYLTRANSFERASE, CYTOSOLIC"/>
    <property type="match status" value="1"/>
</dbReference>
<dbReference type="PANTHER" id="PTHR18919">
    <property type="entry name" value="ACETYL-COA C-ACYLTRANSFERASE"/>
    <property type="match status" value="1"/>
</dbReference>
<dbReference type="Pfam" id="PF02803">
    <property type="entry name" value="Thiolase_C"/>
    <property type="match status" value="1"/>
</dbReference>
<dbReference type="Pfam" id="PF00108">
    <property type="entry name" value="Thiolase_N"/>
    <property type="match status" value="1"/>
</dbReference>
<dbReference type="PIRSF" id="PIRSF000429">
    <property type="entry name" value="Ac-CoA_Ac_transf"/>
    <property type="match status" value="1"/>
</dbReference>
<dbReference type="SUPFAM" id="SSF53901">
    <property type="entry name" value="Thiolase-like"/>
    <property type="match status" value="2"/>
</dbReference>
<dbReference type="PROSITE" id="PS00098">
    <property type="entry name" value="THIOLASE_1"/>
    <property type="match status" value="1"/>
</dbReference>
<dbReference type="PROSITE" id="PS00737">
    <property type="entry name" value="THIOLASE_2"/>
    <property type="match status" value="1"/>
</dbReference>
<dbReference type="PROSITE" id="PS00099">
    <property type="entry name" value="THIOLASE_3"/>
    <property type="match status" value="1"/>
</dbReference>
<name>FADI_SHIBS</name>
<feature type="chain" id="PRO_1000069517" description="3-ketoacyl-CoA thiolase">
    <location>
        <begin position="1"/>
        <end position="436"/>
    </location>
</feature>
<feature type="active site" description="Acyl-thioester intermediate" evidence="1">
    <location>
        <position position="99"/>
    </location>
</feature>
<feature type="active site" description="Proton acceptor" evidence="1">
    <location>
        <position position="392"/>
    </location>
</feature>
<feature type="active site" description="Proton acceptor" evidence="1">
    <location>
        <position position="422"/>
    </location>
</feature>
<proteinExistence type="inferred from homology"/>
<organism>
    <name type="scientific">Shigella boydii serotype 4 (strain Sb227)</name>
    <dbReference type="NCBI Taxonomy" id="300268"/>
    <lineage>
        <taxon>Bacteria</taxon>
        <taxon>Pseudomonadati</taxon>
        <taxon>Pseudomonadota</taxon>
        <taxon>Gammaproteobacteria</taxon>
        <taxon>Enterobacterales</taxon>
        <taxon>Enterobacteriaceae</taxon>
        <taxon>Shigella</taxon>
    </lineage>
</organism>
<protein>
    <recommendedName>
        <fullName evidence="1">3-ketoacyl-CoA thiolase</fullName>
        <ecNumber evidence="1">2.3.1.16</ecNumber>
    </recommendedName>
    <alternativeName>
        <fullName evidence="1">ACSs</fullName>
    </alternativeName>
    <alternativeName>
        <fullName evidence="1">Acetyl-CoA acyltransferase</fullName>
    </alternativeName>
    <alternativeName>
        <fullName evidence="1">Acyl-CoA ligase</fullName>
    </alternativeName>
    <alternativeName>
        <fullName evidence="1">Beta-ketothiolase</fullName>
    </alternativeName>
    <alternativeName>
        <fullName evidence="1">Fatty acid oxidation complex subunit beta</fullName>
    </alternativeName>
</protein>
<accession>Q31YB6</accession>
<comment type="function">
    <text evidence="1">Catalyzes the final step of fatty acid oxidation in which acetyl-CoA is released and the CoA ester of a fatty acid two carbons shorter is formed.</text>
</comment>
<comment type="catalytic activity">
    <reaction evidence="1">
        <text>an acyl-CoA + acetyl-CoA = a 3-oxoacyl-CoA + CoA</text>
        <dbReference type="Rhea" id="RHEA:21564"/>
        <dbReference type="ChEBI" id="CHEBI:57287"/>
        <dbReference type="ChEBI" id="CHEBI:57288"/>
        <dbReference type="ChEBI" id="CHEBI:58342"/>
        <dbReference type="ChEBI" id="CHEBI:90726"/>
        <dbReference type="EC" id="2.3.1.16"/>
    </reaction>
</comment>
<comment type="pathway">
    <text evidence="1">Lipid metabolism; fatty acid beta-oxidation.</text>
</comment>
<comment type="subunit">
    <text evidence="1">Heterotetramer of two alpha chains (FadJ) and two beta chains (FadI).</text>
</comment>
<comment type="subcellular location">
    <subcellularLocation>
        <location evidence="1">Cytoplasm</location>
    </subcellularLocation>
</comment>
<comment type="similarity">
    <text evidence="1">Belongs to the thiolase-like superfamily. Thiolase family.</text>
</comment>
<keyword id="KW-0012">Acyltransferase</keyword>
<keyword id="KW-0963">Cytoplasm</keyword>
<keyword id="KW-0276">Fatty acid metabolism</keyword>
<keyword id="KW-0442">Lipid degradation</keyword>
<keyword id="KW-0443">Lipid metabolism</keyword>
<keyword id="KW-0808">Transferase</keyword>
<sequence length="436" mass="46570">MGQVLPLVTRQGDRIAIVSGLRTPFARQATAFHGIPAVDLGKMVVGELLARSEIPAEVIEQLVFGQVVQMPEAPNIAREIVLGTGMNVHTDAYSVSRACATSFQAVANVAESLMAGTIRAGIAGGADSSSVLPIGVSKKLARVLVDVNKARTMSQRLKLFSRLRLRDLMPVPPAVAEYSTGLRMGDTAEQMAKTYGITREQQDALAHRSHQRAAQAWSDGKLKEEVMTAFIPPYKQPLVEDNNIRGNSSLADYAKLRPAFDRKHGTVTAANSTPLTDGAAAVILMTESRAKELGLVPLGYLRSYAFTAIDVWQDMLFGPAWSTPLALERAGLTMSDLTLIDMHEAFAAQTLANIQLLGSERFACEVLGRAHATGEVDDSKFNVLGGSIAYGHPFAATGAWMITQTLHELRRRGGGFGLVTACAAGGLGAAMVLEAE</sequence>
<gene>
    <name evidence="1" type="primary">fadI</name>
    <name type="ordered locus">SBO_2380</name>
</gene>